<reference key="1">
    <citation type="journal article" date="2005" name="Nature">
        <title>The genome of the social amoeba Dictyostelium discoideum.</title>
        <authorList>
            <person name="Eichinger L."/>
            <person name="Pachebat J.A."/>
            <person name="Gloeckner G."/>
            <person name="Rajandream M.A."/>
            <person name="Sucgang R."/>
            <person name="Berriman M."/>
            <person name="Song J."/>
            <person name="Olsen R."/>
            <person name="Szafranski K."/>
            <person name="Xu Q."/>
            <person name="Tunggal B."/>
            <person name="Kummerfeld S."/>
            <person name="Madera M."/>
            <person name="Konfortov B.A."/>
            <person name="Rivero F."/>
            <person name="Bankier A.T."/>
            <person name="Lehmann R."/>
            <person name="Hamlin N."/>
            <person name="Davies R."/>
            <person name="Gaudet P."/>
            <person name="Fey P."/>
            <person name="Pilcher K."/>
            <person name="Chen G."/>
            <person name="Saunders D."/>
            <person name="Sodergren E.J."/>
            <person name="Davis P."/>
            <person name="Kerhornou A."/>
            <person name="Nie X."/>
            <person name="Hall N."/>
            <person name="Anjard C."/>
            <person name="Hemphill L."/>
            <person name="Bason N."/>
            <person name="Farbrother P."/>
            <person name="Desany B."/>
            <person name="Just E."/>
            <person name="Morio T."/>
            <person name="Rost R."/>
            <person name="Churcher C.M."/>
            <person name="Cooper J."/>
            <person name="Haydock S."/>
            <person name="van Driessche N."/>
            <person name="Cronin A."/>
            <person name="Goodhead I."/>
            <person name="Muzny D.M."/>
            <person name="Mourier T."/>
            <person name="Pain A."/>
            <person name="Lu M."/>
            <person name="Harper D."/>
            <person name="Lindsay R."/>
            <person name="Hauser H."/>
            <person name="James K.D."/>
            <person name="Quiles M."/>
            <person name="Madan Babu M."/>
            <person name="Saito T."/>
            <person name="Buchrieser C."/>
            <person name="Wardroper A."/>
            <person name="Felder M."/>
            <person name="Thangavelu M."/>
            <person name="Johnson D."/>
            <person name="Knights A."/>
            <person name="Loulseged H."/>
            <person name="Mungall K.L."/>
            <person name="Oliver K."/>
            <person name="Price C."/>
            <person name="Quail M.A."/>
            <person name="Urushihara H."/>
            <person name="Hernandez J."/>
            <person name="Rabbinowitsch E."/>
            <person name="Steffen D."/>
            <person name="Sanders M."/>
            <person name="Ma J."/>
            <person name="Kohara Y."/>
            <person name="Sharp S."/>
            <person name="Simmonds M.N."/>
            <person name="Spiegler S."/>
            <person name="Tivey A."/>
            <person name="Sugano S."/>
            <person name="White B."/>
            <person name="Walker D."/>
            <person name="Woodward J.R."/>
            <person name="Winckler T."/>
            <person name="Tanaka Y."/>
            <person name="Shaulsky G."/>
            <person name="Schleicher M."/>
            <person name="Weinstock G.M."/>
            <person name="Rosenthal A."/>
            <person name="Cox E.C."/>
            <person name="Chisholm R.L."/>
            <person name="Gibbs R.A."/>
            <person name="Loomis W.F."/>
            <person name="Platzer M."/>
            <person name="Kay R.R."/>
            <person name="Williams J.G."/>
            <person name="Dear P.H."/>
            <person name="Noegel A.A."/>
            <person name="Barrell B.G."/>
            <person name="Kuspa A."/>
        </authorList>
    </citation>
    <scope>NUCLEOTIDE SEQUENCE [LARGE SCALE GENOMIC DNA]</scope>
    <source>
        <strain>AX4</strain>
    </source>
</reference>
<accession>Q54G19</accession>
<sequence length="108" mass="11377">MNRGFVTGVRIATKCANKSSNCGFKAASSNNIYNSFKATCTLNNNNNNSNIPSSSSSSPSFASFFSSTSTSATLNGSSNNKTVVPKSLENISSASQFNFSTFFIISDV</sequence>
<organism>
    <name type="scientific">Dictyostelium discoideum</name>
    <name type="common">Social amoeba</name>
    <dbReference type="NCBI Taxonomy" id="44689"/>
    <lineage>
        <taxon>Eukaryota</taxon>
        <taxon>Amoebozoa</taxon>
        <taxon>Evosea</taxon>
        <taxon>Eumycetozoa</taxon>
        <taxon>Dictyostelia</taxon>
        <taxon>Dictyosteliales</taxon>
        <taxon>Dictyosteliaceae</taxon>
        <taxon>Dictyostelium</taxon>
    </lineage>
</organism>
<feature type="chain" id="PRO_0000346915" description="Uncharacterized protein DDB_G0290437">
    <location>
        <begin position="1"/>
        <end position="108"/>
    </location>
</feature>
<feature type="region of interest" description="Disordered" evidence="1">
    <location>
        <begin position="48"/>
        <end position="81"/>
    </location>
</feature>
<feature type="compositionally biased region" description="Low complexity" evidence="1">
    <location>
        <begin position="48"/>
        <end position="73"/>
    </location>
</feature>
<gene>
    <name type="ORF">DDB_G0290437</name>
</gene>
<protein>
    <recommendedName>
        <fullName>Uncharacterized protein DDB_G0290437</fullName>
    </recommendedName>
</protein>
<name>Y8904_DICDI</name>
<comment type="sequence caution" evidence="2">
    <conflict type="erroneous gene model prediction">
        <sequence resource="EMBL-CDS" id="EAL62234"/>
    </conflict>
</comment>
<dbReference type="EMBL" id="AAFI02000163">
    <property type="protein sequence ID" value="EAL62234.1"/>
    <property type="status" value="ALT_SEQ"/>
    <property type="molecule type" value="Genomic_DNA"/>
</dbReference>
<dbReference type="RefSeq" id="XP_635753.1">
    <property type="nucleotide sequence ID" value="XM_630661.1"/>
</dbReference>
<dbReference type="FunCoup" id="Q54G19">
    <property type="interactions" value="877"/>
</dbReference>
<dbReference type="PaxDb" id="44689-DDB0188904"/>
<dbReference type="EnsemblProtists" id="EAL62234">
    <property type="protein sequence ID" value="EAL62234"/>
    <property type="gene ID" value="DDB_G0290437"/>
</dbReference>
<dbReference type="GeneID" id="8627672"/>
<dbReference type="KEGG" id="ddi:DDB_G0290437"/>
<dbReference type="dictyBase" id="DDB_G0290437"/>
<dbReference type="VEuPathDB" id="AmoebaDB:DDB_G0290437"/>
<dbReference type="InParanoid" id="Q54G19"/>
<dbReference type="PRO" id="PR:Q54G19"/>
<dbReference type="Proteomes" id="UP000002195">
    <property type="component" value="Chromosome 5"/>
</dbReference>
<proteinExistence type="predicted"/>
<evidence type="ECO:0000256" key="1">
    <source>
        <dbReference type="SAM" id="MobiDB-lite"/>
    </source>
</evidence>
<evidence type="ECO:0000305" key="2"/>
<keyword id="KW-1185">Reference proteome</keyword>